<sequence length="506" mass="53748">MALGTLFLALAAGLSTASPPNILLIFADDLGYGDLGSYGHPSSTTPNLDQLAEGGLRFTDFYVPVSLCTPSRAALLTGRLPVRSGMYPGVLGPSSQGGLPLEEVTLAEVLAARGYLTGMAGKWHLGVGPEGAFLPPHQGFHRFLGIPYSHDQGPCQNLTCFPPDIPCKGGCDQGLVPIPLLANLTVEAQPPWLPGLEARYVSFSRDLMADAQRQGRPFFLYYASHHTHYPQFSGQSFTKRSGRGPFGDSLMELDGAVGALMTTVGDLGLLEETLVIFTADNGPELMRMSNGGCSGLLRCGKGTTFEGGVREPALVYWPGHITPGVTHELASSLDLLPTLAALTGAPLPNVTLDGVDISPLLLGTGKSPRKSVFFYPPYPDEIHGVFAVRNGKYKAHFFTQGSAHSDTTSDPACHAANRLTAHEPPLLYDLSQDPGENYNVLESIEGVSPEALQALKHIQLLKAQYDAAMTFGPSQIAKGEDPALQICCQPSCTPHPVCCHCPGSQS</sequence>
<evidence type="ECO:0000250" key="1">
    <source>
        <dbReference type="UniProtKB" id="P15289"/>
    </source>
</evidence>
<evidence type="ECO:0000255" key="2"/>
<evidence type="ECO:0000269" key="3">
    <source>
    </source>
</evidence>
<evidence type="ECO:0000305" key="4"/>
<name>ARSA_MOUSE</name>
<dbReference type="EC" id="3.1.6.8" evidence="3"/>
<dbReference type="EMBL" id="X73230">
    <property type="protein sequence ID" value="CAA51702.1"/>
    <property type="molecule type" value="mRNA"/>
</dbReference>
<dbReference type="EMBL" id="X73231">
    <property type="protein sequence ID" value="CAA51703.1"/>
    <property type="molecule type" value="Genomic_DNA"/>
</dbReference>
<dbReference type="EMBL" id="AK004540">
    <property type="protein sequence ID" value="BAB23356.1"/>
    <property type="molecule type" value="mRNA"/>
</dbReference>
<dbReference type="EMBL" id="AK132501">
    <property type="protein sequence ID" value="BAE21207.1"/>
    <property type="molecule type" value="mRNA"/>
</dbReference>
<dbReference type="EMBL" id="CH466550">
    <property type="protein sequence ID" value="EDL04336.1"/>
    <property type="molecule type" value="Genomic_DNA"/>
</dbReference>
<dbReference type="EMBL" id="BC011284">
    <property type="protein sequence ID" value="AAH11284.1"/>
    <property type="molecule type" value="mRNA"/>
</dbReference>
<dbReference type="EMBL" id="BC098075">
    <property type="protein sequence ID" value="AAH98075.1"/>
    <property type="molecule type" value="mRNA"/>
</dbReference>
<dbReference type="EMBL" id="M82876">
    <property type="protein sequence ID" value="AAA37260.1"/>
    <property type="molecule type" value="mRNA"/>
</dbReference>
<dbReference type="CCDS" id="CCDS27753.1"/>
<dbReference type="PIR" id="A54190">
    <property type="entry name" value="A54190"/>
</dbReference>
<dbReference type="RefSeq" id="NP_033843.2">
    <property type="nucleotide sequence ID" value="NM_009713.4"/>
</dbReference>
<dbReference type="SMR" id="P50428"/>
<dbReference type="BioGRID" id="198217">
    <property type="interactions" value="2"/>
</dbReference>
<dbReference type="FunCoup" id="P50428">
    <property type="interactions" value="243"/>
</dbReference>
<dbReference type="IntAct" id="P50428">
    <property type="interactions" value="1"/>
</dbReference>
<dbReference type="STRING" id="10090.ENSMUSP00000127646"/>
<dbReference type="SwissLipids" id="SLP:000000914"/>
<dbReference type="GlyConnect" id="2133">
    <property type="glycosylation" value="1 N-Linked glycan (1 site)"/>
</dbReference>
<dbReference type="GlyCosmos" id="P50428">
    <property type="glycosylation" value="3 sites, 1 glycan"/>
</dbReference>
<dbReference type="GlyGen" id="P50428">
    <property type="glycosylation" value="4 sites, 3 N-linked glycans (2 sites)"/>
</dbReference>
<dbReference type="iPTMnet" id="P50428"/>
<dbReference type="PhosphoSitePlus" id="P50428"/>
<dbReference type="SwissPalm" id="P50428"/>
<dbReference type="PaxDb" id="10090-ENSMUSP00000127646"/>
<dbReference type="PeptideAtlas" id="P50428"/>
<dbReference type="ProteomicsDB" id="281905"/>
<dbReference type="Pumba" id="P50428"/>
<dbReference type="Antibodypedia" id="215">
    <property type="antibodies" value="472 antibodies from 35 providers"/>
</dbReference>
<dbReference type="DNASU" id="11883"/>
<dbReference type="Ensembl" id="ENSMUST00000165199.8">
    <property type="protein sequence ID" value="ENSMUSP00000127646.2"/>
    <property type="gene ID" value="ENSMUSG00000022620.15"/>
</dbReference>
<dbReference type="GeneID" id="11883"/>
<dbReference type="KEGG" id="mmu:11883"/>
<dbReference type="UCSC" id="uc007xgy.2">
    <property type="organism name" value="mouse"/>
</dbReference>
<dbReference type="AGR" id="MGI:88077"/>
<dbReference type="CTD" id="410"/>
<dbReference type="MGI" id="MGI:88077">
    <property type="gene designation" value="Arsa"/>
</dbReference>
<dbReference type="VEuPathDB" id="HostDB:ENSMUSG00000022620"/>
<dbReference type="eggNOG" id="KOG3867">
    <property type="taxonomic scope" value="Eukaryota"/>
</dbReference>
<dbReference type="GeneTree" id="ENSGT00940000157610"/>
<dbReference type="HOGENOM" id="CLU_006332_13_7_1"/>
<dbReference type="InParanoid" id="P50428"/>
<dbReference type="OMA" id="YPAYPDE"/>
<dbReference type="OrthoDB" id="103349at2759"/>
<dbReference type="PhylomeDB" id="P50428"/>
<dbReference type="TreeFam" id="TF314186"/>
<dbReference type="Reactome" id="R-MMU-1663150">
    <property type="pathway name" value="The activation of arylsulfatases"/>
</dbReference>
<dbReference type="Reactome" id="R-MMU-6798695">
    <property type="pathway name" value="Neutrophil degranulation"/>
</dbReference>
<dbReference type="Reactome" id="R-MMU-9840310">
    <property type="pathway name" value="Glycosphingolipid catabolism"/>
</dbReference>
<dbReference type="SABIO-RK" id="P50428"/>
<dbReference type="BioGRID-ORCS" id="11883">
    <property type="hits" value="4 hits in 80 CRISPR screens"/>
</dbReference>
<dbReference type="ChiTaRS" id="Arsa">
    <property type="organism name" value="mouse"/>
</dbReference>
<dbReference type="PRO" id="PR:P50428"/>
<dbReference type="Proteomes" id="UP000000589">
    <property type="component" value="Chromosome 15"/>
</dbReference>
<dbReference type="RNAct" id="P50428">
    <property type="molecule type" value="protein"/>
</dbReference>
<dbReference type="Bgee" id="ENSMUSG00000022620">
    <property type="expression patterns" value="Expressed in spermatocyte and 265 other cell types or tissues"/>
</dbReference>
<dbReference type="ExpressionAtlas" id="P50428">
    <property type="expression patterns" value="baseline and differential"/>
</dbReference>
<dbReference type="GO" id="GO:0001669">
    <property type="term" value="C:acrosomal vesicle"/>
    <property type="evidence" value="ECO:0007669"/>
    <property type="project" value="Ensembl"/>
</dbReference>
<dbReference type="GO" id="GO:0005783">
    <property type="term" value="C:endoplasmic reticulum"/>
    <property type="evidence" value="ECO:0007669"/>
    <property type="project" value="UniProtKB-SubCell"/>
</dbReference>
<dbReference type="GO" id="GO:0005768">
    <property type="term" value="C:endosome"/>
    <property type="evidence" value="ECO:0007669"/>
    <property type="project" value="Ensembl"/>
</dbReference>
<dbReference type="GO" id="GO:0005615">
    <property type="term" value="C:extracellular space"/>
    <property type="evidence" value="ECO:0007005"/>
    <property type="project" value="BHF-UCL"/>
</dbReference>
<dbReference type="GO" id="GO:0031232">
    <property type="term" value="C:extrinsic component of external side of plasma membrane"/>
    <property type="evidence" value="ECO:0007669"/>
    <property type="project" value="Ensembl"/>
</dbReference>
<dbReference type="GO" id="GO:0005764">
    <property type="term" value="C:lysosome"/>
    <property type="evidence" value="ECO:0007669"/>
    <property type="project" value="UniProtKB-SubCell"/>
</dbReference>
<dbReference type="GO" id="GO:0016020">
    <property type="term" value="C:membrane"/>
    <property type="evidence" value="ECO:0000314"/>
    <property type="project" value="MGI"/>
</dbReference>
<dbReference type="GO" id="GO:0005886">
    <property type="term" value="C:plasma membrane"/>
    <property type="evidence" value="ECO:0000314"/>
    <property type="project" value="MGI"/>
</dbReference>
<dbReference type="GO" id="GO:0004065">
    <property type="term" value="F:arylsulfatase activity"/>
    <property type="evidence" value="ECO:0007669"/>
    <property type="project" value="Ensembl"/>
</dbReference>
<dbReference type="GO" id="GO:0005509">
    <property type="term" value="F:calcium ion binding"/>
    <property type="evidence" value="ECO:0000250"/>
    <property type="project" value="UniProtKB"/>
</dbReference>
<dbReference type="GO" id="GO:0004098">
    <property type="term" value="F:cerebroside-sulfatase activity"/>
    <property type="evidence" value="ECO:0007669"/>
    <property type="project" value="UniProtKB-EC"/>
</dbReference>
<dbReference type="GO" id="GO:0008484">
    <property type="term" value="F:sulfuric ester hydrolase activity"/>
    <property type="evidence" value="ECO:0000266"/>
    <property type="project" value="MGI"/>
</dbReference>
<dbReference type="GO" id="GO:0006914">
    <property type="term" value="P:autophagy"/>
    <property type="evidence" value="ECO:0007669"/>
    <property type="project" value="Ensembl"/>
</dbReference>
<dbReference type="GO" id="GO:0007339">
    <property type="term" value="P:binding of sperm to zona pellucida"/>
    <property type="evidence" value="ECO:0000315"/>
    <property type="project" value="MGI"/>
</dbReference>
<dbReference type="GO" id="GO:0006629">
    <property type="term" value="P:lipid metabolic process"/>
    <property type="evidence" value="ECO:0007669"/>
    <property type="project" value="UniProtKB-KW"/>
</dbReference>
<dbReference type="GO" id="GO:0043627">
    <property type="term" value="P:response to estrogen"/>
    <property type="evidence" value="ECO:0007669"/>
    <property type="project" value="Ensembl"/>
</dbReference>
<dbReference type="GO" id="GO:0045471">
    <property type="term" value="P:response to ethanol"/>
    <property type="evidence" value="ECO:0007669"/>
    <property type="project" value="Ensembl"/>
</dbReference>
<dbReference type="GO" id="GO:0051597">
    <property type="term" value="P:response to methylmercury"/>
    <property type="evidence" value="ECO:0007669"/>
    <property type="project" value="Ensembl"/>
</dbReference>
<dbReference type="GO" id="GO:0007584">
    <property type="term" value="P:response to nutrient"/>
    <property type="evidence" value="ECO:0007669"/>
    <property type="project" value="Ensembl"/>
</dbReference>
<dbReference type="GO" id="GO:0009268">
    <property type="term" value="P:response to pH"/>
    <property type="evidence" value="ECO:0007669"/>
    <property type="project" value="Ensembl"/>
</dbReference>
<dbReference type="FunFam" id="3.30.1120.10:FF:000003">
    <property type="entry name" value="Arylsulfatase A"/>
    <property type="match status" value="1"/>
</dbReference>
<dbReference type="FunFam" id="3.40.720.10:FF:000023">
    <property type="entry name" value="Arylsulfatase A"/>
    <property type="match status" value="1"/>
</dbReference>
<dbReference type="Gene3D" id="3.30.1120.10">
    <property type="match status" value="1"/>
</dbReference>
<dbReference type="Gene3D" id="3.40.720.10">
    <property type="entry name" value="Alkaline Phosphatase, subunit A"/>
    <property type="match status" value="1"/>
</dbReference>
<dbReference type="InterPro" id="IPR017850">
    <property type="entry name" value="Alkaline_phosphatase_core_sf"/>
</dbReference>
<dbReference type="InterPro" id="IPR050738">
    <property type="entry name" value="Sulfatase"/>
</dbReference>
<dbReference type="InterPro" id="IPR024607">
    <property type="entry name" value="Sulfatase_CS"/>
</dbReference>
<dbReference type="InterPro" id="IPR000917">
    <property type="entry name" value="Sulfatase_N"/>
</dbReference>
<dbReference type="PANTHER" id="PTHR42693:SF11">
    <property type="entry name" value="ARYLSULFATASE A"/>
    <property type="match status" value="1"/>
</dbReference>
<dbReference type="PANTHER" id="PTHR42693">
    <property type="entry name" value="ARYLSULFATASE FAMILY MEMBER"/>
    <property type="match status" value="1"/>
</dbReference>
<dbReference type="Pfam" id="PF00884">
    <property type="entry name" value="Sulfatase"/>
    <property type="match status" value="1"/>
</dbReference>
<dbReference type="Pfam" id="PF14707">
    <property type="entry name" value="Sulfatase_C"/>
    <property type="match status" value="1"/>
</dbReference>
<dbReference type="SUPFAM" id="SSF53649">
    <property type="entry name" value="Alkaline phosphatase-like"/>
    <property type="match status" value="1"/>
</dbReference>
<dbReference type="PROSITE" id="PS00523">
    <property type="entry name" value="SULFATASE_1"/>
    <property type="match status" value="1"/>
</dbReference>
<dbReference type="PROSITE" id="PS00149">
    <property type="entry name" value="SULFATASE_2"/>
    <property type="match status" value="1"/>
</dbReference>
<organism>
    <name type="scientific">Mus musculus</name>
    <name type="common">Mouse</name>
    <dbReference type="NCBI Taxonomy" id="10090"/>
    <lineage>
        <taxon>Eukaryota</taxon>
        <taxon>Metazoa</taxon>
        <taxon>Chordata</taxon>
        <taxon>Craniata</taxon>
        <taxon>Vertebrata</taxon>
        <taxon>Euteleostomi</taxon>
        <taxon>Mammalia</taxon>
        <taxon>Eutheria</taxon>
        <taxon>Euarchontoglires</taxon>
        <taxon>Glires</taxon>
        <taxon>Rodentia</taxon>
        <taxon>Myomorpha</taxon>
        <taxon>Muroidea</taxon>
        <taxon>Muridae</taxon>
        <taxon>Murinae</taxon>
        <taxon>Mus</taxon>
        <taxon>Mus</taxon>
    </lineage>
</organism>
<comment type="function">
    <text evidence="3">Hydrolyzes cerebroside sulfate.</text>
</comment>
<comment type="catalytic activity">
    <reaction evidence="3">
        <text>an N-acyl-1-beta-D-(3-O-sulfo)-galactosyl-sphing-4-enine + H2O = a beta-D-galactosyl-(1&lt;-&gt;1')-N-acylsphing-4-enine + sulfate + H(+)</text>
        <dbReference type="Rhea" id="RHEA:21300"/>
        <dbReference type="ChEBI" id="CHEBI:15377"/>
        <dbReference type="ChEBI" id="CHEBI:15378"/>
        <dbReference type="ChEBI" id="CHEBI:16189"/>
        <dbReference type="ChEBI" id="CHEBI:18390"/>
        <dbReference type="ChEBI" id="CHEBI:75956"/>
        <dbReference type="EC" id="3.1.6.8"/>
    </reaction>
    <physiologicalReaction direction="left-to-right" evidence="3">
        <dbReference type="Rhea" id="RHEA:21301"/>
    </physiologicalReaction>
</comment>
<comment type="cofactor">
    <cofactor evidence="1">
        <name>Ca(2+)</name>
        <dbReference type="ChEBI" id="CHEBI:29108"/>
    </cofactor>
    <text evidence="1">Binds 1 Ca(2+) ion per subunit.</text>
</comment>
<comment type="subunit">
    <text evidence="1">Homodimer at neutral pH and homooctamer at acidic pH. Exists both as a single chain of 58 kDa (component A) or as a chain of 50 kDa (component B) linked by disulfide bond(s) to a 7 kDa chain (component C). Interacts with SUMF1 (By similarity).</text>
</comment>
<comment type="subcellular location">
    <subcellularLocation>
        <location evidence="1">Endoplasmic reticulum</location>
    </subcellularLocation>
    <subcellularLocation>
        <location evidence="1">Lysosome</location>
    </subcellularLocation>
</comment>
<comment type="PTM">
    <text evidence="1">The conversion to 3-oxoalanine (also known as C-formylglycine, FGly), of a serine or cysteine residue in prokaryotes and of a cysteine residue in eukaryotes, is critical for catalytic activity. This post-translational modification is severely defective in multiple sulfatase deficiency (MSD).</text>
</comment>
<comment type="similarity">
    <text evidence="4">Belongs to the sulfatase family.</text>
</comment>
<protein>
    <recommendedName>
        <fullName>Arylsulfatase A</fullName>
        <shortName>ASA</shortName>
        <ecNumber evidence="3">3.1.6.8</ecNumber>
    </recommendedName>
    <alternativeName>
        <fullName>Cerebroside-sulfatase</fullName>
    </alternativeName>
</protein>
<gene>
    <name type="primary">Arsa</name>
    <name type="synonym">As2</name>
</gene>
<keyword id="KW-0106">Calcium</keyword>
<keyword id="KW-1015">Disulfide bond</keyword>
<keyword id="KW-0256">Endoplasmic reticulum</keyword>
<keyword id="KW-0325">Glycoprotein</keyword>
<keyword id="KW-0378">Hydrolase</keyword>
<keyword id="KW-0443">Lipid metabolism</keyword>
<keyword id="KW-0458">Lysosome</keyword>
<keyword id="KW-0479">Metal-binding</keyword>
<keyword id="KW-1185">Reference proteome</keyword>
<keyword id="KW-0732">Signal</keyword>
<reference key="1">
    <citation type="journal article" date="1994" name="Genomics">
        <title>Structure of the mouse arylsulfatase A gene and cDNA.</title>
        <authorList>
            <person name="Kreysing J."/>
            <person name="Polten A."/>
            <person name="Hess B."/>
            <person name="von Figura K."/>
            <person name="Menz K."/>
            <person name="Steiner F."/>
            <person name="Gieselmann V."/>
        </authorList>
    </citation>
    <scope>NUCLEOTIDE SEQUENCE [GENOMIC DNA / MRNA]</scope>
    <source>
        <strain>129/Sv</strain>
        <strain>C57BL/6J</strain>
    </source>
</reference>
<reference key="2">
    <citation type="journal article" date="2005" name="Science">
        <title>The transcriptional landscape of the mammalian genome.</title>
        <authorList>
            <person name="Carninci P."/>
            <person name="Kasukawa T."/>
            <person name="Katayama S."/>
            <person name="Gough J."/>
            <person name="Frith M.C."/>
            <person name="Maeda N."/>
            <person name="Oyama R."/>
            <person name="Ravasi T."/>
            <person name="Lenhard B."/>
            <person name="Wells C."/>
            <person name="Kodzius R."/>
            <person name="Shimokawa K."/>
            <person name="Bajic V.B."/>
            <person name="Brenner S.E."/>
            <person name="Batalov S."/>
            <person name="Forrest A.R."/>
            <person name="Zavolan M."/>
            <person name="Davis M.J."/>
            <person name="Wilming L.G."/>
            <person name="Aidinis V."/>
            <person name="Allen J.E."/>
            <person name="Ambesi-Impiombato A."/>
            <person name="Apweiler R."/>
            <person name="Aturaliya R.N."/>
            <person name="Bailey T.L."/>
            <person name="Bansal M."/>
            <person name="Baxter L."/>
            <person name="Beisel K.W."/>
            <person name="Bersano T."/>
            <person name="Bono H."/>
            <person name="Chalk A.M."/>
            <person name="Chiu K.P."/>
            <person name="Choudhary V."/>
            <person name="Christoffels A."/>
            <person name="Clutterbuck D.R."/>
            <person name="Crowe M.L."/>
            <person name="Dalla E."/>
            <person name="Dalrymple B.P."/>
            <person name="de Bono B."/>
            <person name="Della Gatta G."/>
            <person name="di Bernardo D."/>
            <person name="Down T."/>
            <person name="Engstrom P."/>
            <person name="Fagiolini M."/>
            <person name="Faulkner G."/>
            <person name="Fletcher C.F."/>
            <person name="Fukushima T."/>
            <person name="Furuno M."/>
            <person name="Futaki S."/>
            <person name="Gariboldi M."/>
            <person name="Georgii-Hemming P."/>
            <person name="Gingeras T.R."/>
            <person name="Gojobori T."/>
            <person name="Green R.E."/>
            <person name="Gustincich S."/>
            <person name="Harbers M."/>
            <person name="Hayashi Y."/>
            <person name="Hensch T.K."/>
            <person name="Hirokawa N."/>
            <person name="Hill D."/>
            <person name="Huminiecki L."/>
            <person name="Iacono M."/>
            <person name="Ikeo K."/>
            <person name="Iwama A."/>
            <person name="Ishikawa T."/>
            <person name="Jakt M."/>
            <person name="Kanapin A."/>
            <person name="Katoh M."/>
            <person name="Kawasawa Y."/>
            <person name="Kelso J."/>
            <person name="Kitamura H."/>
            <person name="Kitano H."/>
            <person name="Kollias G."/>
            <person name="Krishnan S.P."/>
            <person name="Kruger A."/>
            <person name="Kummerfeld S.K."/>
            <person name="Kurochkin I.V."/>
            <person name="Lareau L.F."/>
            <person name="Lazarevic D."/>
            <person name="Lipovich L."/>
            <person name="Liu J."/>
            <person name="Liuni S."/>
            <person name="McWilliam S."/>
            <person name="Madan Babu M."/>
            <person name="Madera M."/>
            <person name="Marchionni L."/>
            <person name="Matsuda H."/>
            <person name="Matsuzawa S."/>
            <person name="Miki H."/>
            <person name="Mignone F."/>
            <person name="Miyake S."/>
            <person name="Morris K."/>
            <person name="Mottagui-Tabar S."/>
            <person name="Mulder N."/>
            <person name="Nakano N."/>
            <person name="Nakauchi H."/>
            <person name="Ng P."/>
            <person name="Nilsson R."/>
            <person name="Nishiguchi S."/>
            <person name="Nishikawa S."/>
            <person name="Nori F."/>
            <person name="Ohara O."/>
            <person name="Okazaki Y."/>
            <person name="Orlando V."/>
            <person name="Pang K.C."/>
            <person name="Pavan W.J."/>
            <person name="Pavesi G."/>
            <person name="Pesole G."/>
            <person name="Petrovsky N."/>
            <person name="Piazza S."/>
            <person name="Reed J."/>
            <person name="Reid J.F."/>
            <person name="Ring B.Z."/>
            <person name="Ringwald M."/>
            <person name="Rost B."/>
            <person name="Ruan Y."/>
            <person name="Salzberg S.L."/>
            <person name="Sandelin A."/>
            <person name="Schneider C."/>
            <person name="Schoenbach C."/>
            <person name="Sekiguchi K."/>
            <person name="Semple C.A."/>
            <person name="Seno S."/>
            <person name="Sessa L."/>
            <person name="Sheng Y."/>
            <person name="Shibata Y."/>
            <person name="Shimada H."/>
            <person name="Shimada K."/>
            <person name="Silva D."/>
            <person name="Sinclair B."/>
            <person name="Sperling S."/>
            <person name="Stupka E."/>
            <person name="Sugiura K."/>
            <person name="Sultana R."/>
            <person name="Takenaka Y."/>
            <person name="Taki K."/>
            <person name="Tammoja K."/>
            <person name="Tan S.L."/>
            <person name="Tang S."/>
            <person name="Taylor M.S."/>
            <person name="Tegner J."/>
            <person name="Teichmann S.A."/>
            <person name="Ueda H.R."/>
            <person name="van Nimwegen E."/>
            <person name="Verardo R."/>
            <person name="Wei C.L."/>
            <person name="Yagi K."/>
            <person name="Yamanishi H."/>
            <person name="Zabarovsky E."/>
            <person name="Zhu S."/>
            <person name="Zimmer A."/>
            <person name="Hide W."/>
            <person name="Bult C."/>
            <person name="Grimmond S.M."/>
            <person name="Teasdale R.D."/>
            <person name="Liu E.T."/>
            <person name="Brusic V."/>
            <person name="Quackenbush J."/>
            <person name="Wahlestedt C."/>
            <person name="Mattick J.S."/>
            <person name="Hume D.A."/>
            <person name="Kai C."/>
            <person name="Sasaki D."/>
            <person name="Tomaru Y."/>
            <person name="Fukuda S."/>
            <person name="Kanamori-Katayama M."/>
            <person name="Suzuki M."/>
            <person name="Aoki J."/>
            <person name="Arakawa T."/>
            <person name="Iida J."/>
            <person name="Imamura K."/>
            <person name="Itoh M."/>
            <person name="Kato T."/>
            <person name="Kawaji H."/>
            <person name="Kawagashira N."/>
            <person name="Kawashima T."/>
            <person name="Kojima M."/>
            <person name="Kondo S."/>
            <person name="Konno H."/>
            <person name="Nakano K."/>
            <person name="Ninomiya N."/>
            <person name="Nishio T."/>
            <person name="Okada M."/>
            <person name="Plessy C."/>
            <person name="Shibata K."/>
            <person name="Shiraki T."/>
            <person name="Suzuki S."/>
            <person name="Tagami M."/>
            <person name="Waki K."/>
            <person name="Watahiki A."/>
            <person name="Okamura-Oho Y."/>
            <person name="Suzuki H."/>
            <person name="Kawai J."/>
            <person name="Hayashizaki Y."/>
        </authorList>
    </citation>
    <scope>NUCLEOTIDE SEQUENCE [LARGE SCALE MRNA]</scope>
    <source>
        <strain>C57BL/6J</strain>
        <tissue>Lung</tissue>
        <tissue>Skin</tissue>
    </source>
</reference>
<reference key="3">
    <citation type="submission" date="2005-09" db="EMBL/GenBank/DDBJ databases">
        <authorList>
            <person name="Mural R.J."/>
            <person name="Adams M.D."/>
            <person name="Myers E.W."/>
            <person name="Smith H.O."/>
            <person name="Venter J.C."/>
        </authorList>
    </citation>
    <scope>NUCLEOTIDE SEQUENCE [LARGE SCALE GENOMIC DNA]</scope>
</reference>
<reference key="4">
    <citation type="journal article" date="2004" name="Genome Res.">
        <title>The status, quality, and expansion of the NIH full-length cDNA project: the Mammalian Gene Collection (MGC).</title>
        <authorList>
            <consortium name="The MGC Project Team"/>
        </authorList>
    </citation>
    <scope>NUCLEOTIDE SEQUENCE [LARGE SCALE MRNA]</scope>
    <source>
        <tissue>Mammary tumor</tissue>
        <tissue>Trophoblast stem cell</tissue>
    </source>
</reference>
<reference key="5">
    <citation type="journal article" date="1992" name="Genomics">
        <title>The sulfatase gene family: cross-species PCR cloning using the MOPAC technique.</title>
        <authorList>
            <person name="Grompe M."/>
            <person name="Pieretti M."/>
            <person name="Caskey C.T."/>
            <person name="Ballabio A."/>
        </authorList>
    </citation>
    <scope>NUCLEOTIDE SEQUENCE [MRNA] OF 32-66</scope>
</reference>
<reference key="6">
    <citation type="journal article" date="2010" name="Cell">
        <title>A tissue-specific atlas of mouse protein phosphorylation and expression.</title>
        <authorList>
            <person name="Huttlin E.L."/>
            <person name="Jedrychowski M.P."/>
            <person name="Elias J.E."/>
            <person name="Goswami T."/>
            <person name="Rad R."/>
            <person name="Beausoleil S.A."/>
            <person name="Villen J."/>
            <person name="Haas W."/>
            <person name="Sowa M.E."/>
            <person name="Gygi S.P."/>
        </authorList>
    </citation>
    <scope>IDENTIFICATION BY MASS SPECTROMETRY [LARGE SCALE ANALYSIS]</scope>
    <source>
        <tissue>Brain</tissue>
        <tissue>Brown adipose tissue</tissue>
        <tissue>Lung</tissue>
        <tissue>Testis</tissue>
    </source>
</reference>
<reference key="7">
    <citation type="journal article" date="2014" name="Anal. Chem.">
        <title>A new analytical bench assay for the determination of arylsulfatase a activity toward galactosyl-3-sulfate ceramide: implication for metachromatic leukodystrophy diagnosis.</title>
        <authorList>
            <person name="Morena F."/>
            <person name="di Girolamo I."/>
            <person name="Emiliani C."/>
            <person name="Gritti A."/>
            <person name="Biffi A."/>
            <person name="Martino S."/>
        </authorList>
    </citation>
    <scope>CATALYTIC ACTIVITY</scope>
    <scope>FUNCTION</scope>
</reference>
<feature type="signal peptide" evidence="1">
    <location>
        <begin position="1"/>
        <end position="17"/>
    </location>
</feature>
<feature type="chain" id="PRO_0000033420" description="Arylsulfatase A">
    <location>
        <begin position="18"/>
        <end position="506"/>
    </location>
</feature>
<feature type="active site" description="Nucleophile" evidence="1">
    <location>
        <position position="68"/>
    </location>
</feature>
<feature type="active site" evidence="1">
    <location>
        <position position="124"/>
    </location>
</feature>
<feature type="binding site" evidence="1">
    <location>
        <position position="28"/>
    </location>
    <ligand>
        <name>Ca(2+)</name>
        <dbReference type="ChEBI" id="CHEBI:29108"/>
    </ligand>
</feature>
<feature type="binding site" evidence="1">
    <location>
        <position position="29"/>
    </location>
    <ligand>
        <name>Ca(2+)</name>
        <dbReference type="ChEBI" id="CHEBI:29108"/>
    </ligand>
</feature>
<feature type="binding site" description="via 3-oxoalanine" evidence="1">
    <location>
        <position position="68"/>
    </location>
    <ligand>
        <name>Ca(2+)</name>
        <dbReference type="ChEBI" id="CHEBI:29108"/>
    </ligand>
</feature>
<feature type="binding site" evidence="1">
    <location>
        <position position="122"/>
    </location>
    <ligand>
        <name>substrate</name>
    </ligand>
</feature>
<feature type="binding site" evidence="1">
    <location>
        <position position="149"/>
    </location>
    <ligand>
        <name>substrate</name>
    </ligand>
</feature>
<feature type="binding site" evidence="1">
    <location>
        <position position="228"/>
    </location>
    <ligand>
        <name>substrate</name>
    </ligand>
</feature>
<feature type="binding site" evidence="1">
    <location>
        <position position="280"/>
    </location>
    <ligand>
        <name>Ca(2+)</name>
        <dbReference type="ChEBI" id="CHEBI:29108"/>
    </ligand>
</feature>
<feature type="binding site" evidence="1">
    <location>
        <position position="281"/>
    </location>
    <ligand>
        <name>Ca(2+)</name>
        <dbReference type="ChEBI" id="CHEBI:29108"/>
    </ligand>
</feature>
<feature type="binding site" evidence="1">
    <location>
        <position position="301"/>
    </location>
    <ligand>
        <name>substrate</name>
    </ligand>
</feature>
<feature type="modified residue" description="3-oxoalanine (Cys)" evidence="1">
    <location>
        <position position="68"/>
    </location>
</feature>
<feature type="glycosylation site" description="N-linked (GlcNAc...) asparagine" evidence="2">
    <location>
        <position position="157"/>
    </location>
</feature>
<feature type="glycosylation site" description="N-linked (GlcNAc...) asparagine" evidence="2">
    <location>
        <position position="183"/>
    </location>
</feature>
<feature type="glycosylation site" description="N-linked (GlcNAc...) asparagine" evidence="2">
    <location>
        <position position="349"/>
    </location>
</feature>
<feature type="disulfide bond" evidence="1">
    <location>
        <begin position="155"/>
        <end position="171"/>
    </location>
</feature>
<feature type="disulfide bond" evidence="1">
    <location>
        <begin position="160"/>
        <end position="167"/>
    </location>
</feature>
<feature type="disulfide bond" evidence="1">
    <location>
        <begin position="299"/>
        <end position="413"/>
    </location>
</feature>
<feature type="disulfide bond" evidence="1">
    <location>
        <begin position="487"/>
        <end position="499"/>
    </location>
</feature>
<feature type="disulfide bond" evidence="1">
    <location>
        <begin position="488"/>
        <end position="501"/>
    </location>
</feature>
<feature type="disulfide bond" evidence="1">
    <location>
        <begin position="492"/>
        <end position="498"/>
    </location>
</feature>
<feature type="sequence conflict" description="In Ref. 1; CAA51702/CAA51703." evidence="4" ref="1">
    <original>G</original>
    <variation>A</variation>
    <location>
        <position position="85"/>
    </location>
</feature>
<feature type="sequence conflict" description="In Ref. 1; CAA51702/CAA51703." evidence="4" ref="1">
    <original>V</original>
    <variation>L</variation>
    <location>
        <position position="104"/>
    </location>
</feature>
<accession>P50428</accession>
<accession>Q9DC66</accession>
<proteinExistence type="evidence at protein level"/>